<name>RPPH_RHOPB</name>
<organism>
    <name type="scientific">Rhodopseudomonas palustris (strain BisB18)</name>
    <dbReference type="NCBI Taxonomy" id="316056"/>
    <lineage>
        <taxon>Bacteria</taxon>
        <taxon>Pseudomonadati</taxon>
        <taxon>Pseudomonadota</taxon>
        <taxon>Alphaproteobacteria</taxon>
        <taxon>Hyphomicrobiales</taxon>
        <taxon>Nitrobacteraceae</taxon>
        <taxon>Rhodopseudomonas</taxon>
    </lineage>
</organism>
<dbReference type="EC" id="3.6.1.-" evidence="1"/>
<dbReference type="EMBL" id="CP000301">
    <property type="protein sequence ID" value="ABD85743.1"/>
    <property type="molecule type" value="Genomic_DNA"/>
</dbReference>
<dbReference type="SMR" id="Q21CZ3"/>
<dbReference type="STRING" id="316056.RPC_0168"/>
<dbReference type="KEGG" id="rpc:RPC_0168"/>
<dbReference type="eggNOG" id="COG1051">
    <property type="taxonomic scope" value="Bacteria"/>
</dbReference>
<dbReference type="HOGENOM" id="CLU_087195_3_0_5"/>
<dbReference type="OrthoDB" id="9816040at2"/>
<dbReference type="GO" id="GO:0034432">
    <property type="term" value="F:bis(5'-adenosyl)-pentaphosphatase activity"/>
    <property type="evidence" value="ECO:0007669"/>
    <property type="project" value="TreeGrafter"/>
</dbReference>
<dbReference type="GO" id="GO:0008893">
    <property type="term" value="F:guanosine-3',5'-bis(diphosphate) 3'-diphosphatase activity"/>
    <property type="evidence" value="ECO:0007669"/>
    <property type="project" value="TreeGrafter"/>
</dbReference>
<dbReference type="GO" id="GO:0006753">
    <property type="term" value="P:nucleoside phosphate metabolic process"/>
    <property type="evidence" value="ECO:0007669"/>
    <property type="project" value="TreeGrafter"/>
</dbReference>
<dbReference type="GO" id="GO:0019693">
    <property type="term" value="P:ribose phosphate metabolic process"/>
    <property type="evidence" value="ECO:0007669"/>
    <property type="project" value="TreeGrafter"/>
</dbReference>
<dbReference type="CDD" id="cd03671">
    <property type="entry name" value="NUDIX_Ap4A_hydrolase_plant_like"/>
    <property type="match status" value="1"/>
</dbReference>
<dbReference type="Gene3D" id="3.90.79.10">
    <property type="entry name" value="Nucleoside Triphosphate Pyrophosphohydrolase"/>
    <property type="match status" value="1"/>
</dbReference>
<dbReference type="HAMAP" id="MF_00298">
    <property type="entry name" value="Nudix_RppH"/>
    <property type="match status" value="1"/>
</dbReference>
<dbReference type="InterPro" id="IPR015797">
    <property type="entry name" value="NUDIX_hydrolase-like_dom_sf"/>
</dbReference>
<dbReference type="InterPro" id="IPR000086">
    <property type="entry name" value="NUDIX_hydrolase_dom"/>
</dbReference>
<dbReference type="InterPro" id="IPR022927">
    <property type="entry name" value="RppH"/>
</dbReference>
<dbReference type="NCBIfam" id="NF001938">
    <property type="entry name" value="PRK00714.1-5"/>
    <property type="match status" value="1"/>
</dbReference>
<dbReference type="PANTHER" id="PTHR11839:SF22">
    <property type="entry name" value="NUDIX HYDROLASE 26, CHLOROPLASTIC"/>
    <property type="match status" value="1"/>
</dbReference>
<dbReference type="PANTHER" id="PTHR11839">
    <property type="entry name" value="UDP/ADP-SUGAR PYROPHOSPHATASE"/>
    <property type="match status" value="1"/>
</dbReference>
<dbReference type="Pfam" id="PF00293">
    <property type="entry name" value="NUDIX"/>
    <property type="match status" value="1"/>
</dbReference>
<dbReference type="SUPFAM" id="SSF55811">
    <property type="entry name" value="Nudix"/>
    <property type="match status" value="1"/>
</dbReference>
<dbReference type="PROSITE" id="PS51462">
    <property type="entry name" value="NUDIX"/>
    <property type="match status" value="1"/>
</dbReference>
<proteinExistence type="inferred from homology"/>
<sequence length="175" mass="19886">MTRYDDLPYRTCVGMMLLNAEGLVFIGRRLGGIEHVDETHVWQMPQGGVDPGEDPWTAAKRELYEETSVRSVEKLGEIADWLIYDIPRTVAGRSWKGRYRGQRQKWYAVRFTGDDSEIDVVSPGGGHKAEFISWRWEPMQNLPDLIVPFKRPVYERVVKEFAALAKDAAKVSGGG</sequence>
<protein>
    <recommendedName>
        <fullName evidence="1">RNA pyrophosphohydrolase</fullName>
        <ecNumber evidence="1">3.6.1.-</ecNumber>
    </recommendedName>
    <alternativeName>
        <fullName evidence="1">(Di)nucleoside polyphosphate hydrolase</fullName>
    </alternativeName>
</protein>
<reference key="1">
    <citation type="submission" date="2006-03" db="EMBL/GenBank/DDBJ databases">
        <title>Complete sequence of Rhodopseudomonas palustris BisB18.</title>
        <authorList>
            <consortium name="US DOE Joint Genome Institute"/>
            <person name="Copeland A."/>
            <person name="Lucas S."/>
            <person name="Lapidus A."/>
            <person name="Barry K."/>
            <person name="Detter J.C."/>
            <person name="Glavina del Rio T."/>
            <person name="Hammon N."/>
            <person name="Israni S."/>
            <person name="Dalin E."/>
            <person name="Tice H."/>
            <person name="Pitluck S."/>
            <person name="Chain P."/>
            <person name="Malfatti S."/>
            <person name="Shin M."/>
            <person name="Vergez L."/>
            <person name="Schmutz J."/>
            <person name="Larimer F."/>
            <person name="Land M."/>
            <person name="Hauser L."/>
            <person name="Pelletier D.A."/>
            <person name="Kyrpides N."/>
            <person name="Anderson I."/>
            <person name="Oda Y."/>
            <person name="Harwood C.S."/>
            <person name="Richardson P."/>
        </authorList>
    </citation>
    <scope>NUCLEOTIDE SEQUENCE [LARGE SCALE GENOMIC DNA]</scope>
    <source>
        <strain>BisB18</strain>
    </source>
</reference>
<accession>Q21CZ3</accession>
<gene>
    <name evidence="1" type="primary">rppH</name>
    <name evidence="1" type="synonym">nudH</name>
    <name type="ordered locus">RPC_0168</name>
</gene>
<evidence type="ECO:0000255" key="1">
    <source>
        <dbReference type="HAMAP-Rule" id="MF_00298"/>
    </source>
</evidence>
<keyword id="KW-0378">Hydrolase</keyword>
<feature type="chain" id="PRO_1000021982" description="RNA pyrophosphohydrolase">
    <location>
        <begin position="1"/>
        <end position="175"/>
    </location>
</feature>
<feature type="domain" description="Nudix hydrolase" evidence="1">
    <location>
        <begin position="8"/>
        <end position="159"/>
    </location>
</feature>
<feature type="short sequence motif" description="Nudix box">
    <location>
        <begin position="47"/>
        <end position="68"/>
    </location>
</feature>
<comment type="function">
    <text evidence="1">Accelerates the degradation of transcripts by removing pyrophosphate from the 5'-end of triphosphorylated RNA, leading to a more labile monophosphorylated state that can stimulate subsequent ribonuclease cleavage.</text>
</comment>
<comment type="cofactor">
    <cofactor evidence="1">
        <name>a divalent metal cation</name>
        <dbReference type="ChEBI" id="CHEBI:60240"/>
    </cofactor>
</comment>
<comment type="similarity">
    <text evidence="1">Belongs to the Nudix hydrolase family. RppH subfamily.</text>
</comment>